<comment type="function">
    <text evidence="1">Plays a role in virus cell tropism, and may be required for efficient virus replication in macrophages.</text>
</comment>
<comment type="induction">
    <text evidence="1">Expressed in the early phase of the viral replicative cycle.</text>
</comment>
<comment type="similarity">
    <text evidence="2">Belongs to the asfivirus MGF 505 family.</text>
</comment>
<keyword id="KW-0244">Early protein</keyword>
<sequence>MSSSLQELCRKKLPDCILPEFFDDYVLQLLGLHWQDHGSLQRIEKNQILVQQEPIHINEALKVAASEGNYEIVELLLSWEADPRYAVVGALESKYYDLVHKYYGQVKDCHDILPLIQNPETFEKCHELNSTCSLKCLFKHAVMNDMLPILEKYTDYLDRWEYCSQMLFELACRKKKYEMVVWIEGVLCVGKVTSLFTIAISNRDLQLYSLGYSIILEKMYSCRQDPTFLLNHFLRDVSIKGLLPFVLKTIEYGGSKEIAITLAKKYQHKHILKYFETWES</sequence>
<evidence type="ECO:0000250" key="1">
    <source>
        <dbReference type="UniProtKB" id="Q89642"/>
    </source>
</evidence>
<evidence type="ECO:0000305" key="2"/>
<name>5053R_ASFP4</name>
<organismHost>
    <name type="scientific">Ornithodoros</name>
    <name type="common">relapsing fever ticks</name>
    <dbReference type="NCBI Taxonomy" id="6937"/>
</organismHost>
<organismHost>
    <name type="scientific">Phacochoerus aethiopicus</name>
    <name type="common">Warthog</name>
    <dbReference type="NCBI Taxonomy" id="85517"/>
</organismHost>
<organismHost>
    <name type="scientific">Phacochoerus africanus</name>
    <name type="common">Warthog</name>
    <dbReference type="NCBI Taxonomy" id="41426"/>
</organismHost>
<organismHost>
    <name type="scientific">Potamochoerus larvatus</name>
    <name type="common">Bushpig</name>
    <dbReference type="NCBI Taxonomy" id="273792"/>
</organismHost>
<organismHost>
    <name type="scientific">Sus scrofa</name>
    <name type="common">Pig</name>
    <dbReference type="NCBI Taxonomy" id="9823"/>
</organismHost>
<dbReference type="EMBL" id="AY261363">
    <property type="status" value="NOT_ANNOTATED_CDS"/>
    <property type="molecule type" value="Genomic_DNA"/>
</dbReference>
<dbReference type="SMR" id="P0C9T0"/>
<dbReference type="Proteomes" id="UP000000859">
    <property type="component" value="Segment"/>
</dbReference>
<dbReference type="InterPro" id="IPR004858">
    <property type="entry name" value="MGF_505"/>
</dbReference>
<dbReference type="Pfam" id="PF03158">
    <property type="entry name" value="DUF249"/>
    <property type="match status" value="1"/>
</dbReference>
<feature type="chain" id="PRO_0000373325" description="Protein MGF 505-3R">
    <location>
        <begin position="1"/>
        <end position="280"/>
    </location>
</feature>
<gene>
    <name type="ordered locus">Pret-039</name>
</gene>
<protein>
    <recommendedName>
        <fullName>Protein MGF 505-3R</fullName>
    </recommendedName>
</protein>
<reference key="1">
    <citation type="submission" date="2003-03" db="EMBL/GenBank/DDBJ databases">
        <title>African swine fever virus genomes.</title>
        <authorList>
            <person name="Kutish G.F."/>
            <person name="Rock D.L."/>
        </authorList>
    </citation>
    <scope>NUCLEOTIDE SEQUENCE [LARGE SCALE GENOMIC DNA]</scope>
</reference>
<proteinExistence type="inferred from homology"/>
<accession>P0C9T0</accession>
<organism>
    <name type="scientific">African swine fever virus (isolate Tick/South Africa/Pretoriuskop Pr4/1996)</name>
    <name type="common">ASFV</name>
    <dbReference type="NCBI Taxonomy" id="561443"/>
    <lineage>
        <taxon>Viruses</taxon>
        <taxon>Varidnaviria</taxon>
        <taxon>Bamfordvirae</taxon>
        <taxon>Nucleocytoviricota</taxon>
        <taxon>Pokkesviricetes</taxon>
        <taxon>Asfuvirales</taxon>
        <taxon>Asfarviridae</taxon>
        <taxon>Asfivirus</taxon>
        <taxon>African swine fever virus</taxon>
    </lineage>
</organism>